<evidence type="ECO:0000255" key="1">
    <source>
        <dbReference type="HAMAP-Rule" id="MF_01183"/>
    </source>
</evidence>
<organism>
    <name type="scientific">Hydrogenovibrio crunogenus (strain DSM 25203 / XCL-2)</name>
    <name type="common">Thiomicrospira crunogena</name>
    <dbReference type="NCBI Taxonomy" id="317025"/>
    <lineage>
        <taxon>Bacteria</taxon>
        <taxon>Pseudomonadati</taxon>
        <taxon>Pseudomonadota</taxon>
        <taxon>Gammaproteobacteria</taxon>
        <taxon>Thiotrichales</taxon>
        <taxon>Piscirickettsiaceae</taxon>
        <taxon>Hydrogenovibrio</taxon>
    </lineage>
</organism>
<keyword id="KW-0143">Chaperone</keyword>
<keyword id="KW-0413">Isomerase</keyword>
<keyword id="KW-0574">Periplasm</keyword>
<keyword id="KW-0677">Repeat</keyword>
<keyword id="KW-0697">Rotamase</keyword>
<keyword id="KW-0732">Signal</keyword>
<sequence>MKKIIPTNLFKLISILFILTPFFAWSAPQETLIDRVVAVVNDNIILKSELDAEVNLAKQDLQARNIPVTNPEELASKVLDKIILERLQLQRINQLGIKIADDELFSQIQEIAKQNNLTVIELRDRLNMSQKNGFESFRERIRQQMLFQKLREVEVLSKTQVTEDEVSNFIQRQALVQSDVEYHLGHIMVSLPESATPDQRDASKQKAQEILQKIRTGGDFSQMAVRYSEGSKALQGGDLGWLGIDQIPTFFNDALNQLEIGETSDVIRSPVGFHIIQLQGKRNKNSQIVKQYHLYRFILLSEDAQNKQQPSPTLVKLAESLNSLESFKQLNEKYSDIPASVNANGNLGWQTAKEMSPEYYQAIEALQPGHAAKPFATEKGWVILFLDGIRDQDLSLKDKRKQAMQTLRMKKANESYEIWLRRLKDEALIDIRLEDPEIMKKQPSHEEANAN</sequence>
<name>SURA_HYDCU</name>
<comment type="function">
    <text evidence="1">Chaperone involved in the correct folding and assembly of outer membrane proteins. Recognizes specific patterns of aromatic residues and the orientation of their side chains, which are found more frequently in integral outer membrane proteins. May act in both early periplasmic and late outer membrane-associated steps of protein maturation.</text>
</comment>
<comment type="catalytic activity">
    <reaction evidence="1">
        <text>[protein]-peptidylproline (omega=180) = [protein]-peptidylproline (omega=0)</text>
        <dbReference type="Rhea" id="RHEA:16237"/>
        <dbReference type="Rhea" id="RHEA-COMP:10747"/>
        <dbReference type="Rhea" id="RHEA-COMP:10748"/>
        <dbReference type="ChEBI" id="CHEBI:83833"/>
        <dbReference type="ChEBI" id="CHEBI:83834"/>
        <dbReference type="EC" id="5.2.1.8"/>
    </reaction>
</comment>
<comment type="subcellular location">
    <subcellularLocation>
        <location evidence="1">Periplasm</location>
    </subcellularLocation>
    <text evidence="1">Is capable of associating with the outer membrane.</text>
</comment>
<comment type="domain">
    <text evidence="1">The PPIase activity resides only in the second parvulin domain. The N-terminal region and the C-terminal tail are necessary and sufficient for the chaperone activity of SurA. The PPIase activity is dispensable for SurA to function as a chaperone. The N-terminal region and the C-terminal tail are also required for porin recognition.</text>
</comment>
<feature type="signal peptide" evidence="1">
    <location>
        <begin position="1"/>
        <end position="26"/>
    </location>
</feature>
<feature type="chain" id="PRO_5000102084" description="Chaperone SurA">
    <location>
        <begin position="27"/>
        <end position="451"/>
    </location>
</feature>
<feature type="domain" description="PpiC 1" evidence="1">
    <location>
        <begin position="179"/>
        <end position="280"/>
    </location>
</feature>
<feature type="domain" description="PpiC 2" evidence="1">
    <location>
        <begin position="290"/>
        <end position="388"/>
    </location>
</feature>
<dbReference type="EC" id="5.2.1.8" evidence="1"/>
<dbReference type="EMBL" id="CP000109">
    <property type="protein sequence ID" value="ABB42247.1"/>
    <property type="molecule type" value="Genomic_DNA"/>
</dbReference>
<dbReference type="SMR" id="Q31F26"/>
<dbReference type="STRING" id="317025.Tcr_1655"/>
<dbReference type="KEGG" id="tcx:Tcr_1655"/>
<dbReference type="eggNOG" id="COG0760">
    <property type="taxonomic scope" value="Bacteria"/>
</dbReference>
<dbReference type="HOGENOM" id="CLU_034646_11_0_6"/>
<dbReference type="OrthoDB" id="14196at2"/>
<dbReference type="GO" id="GO:0030288">
    <property type="term" value="C:outer membrane-bounded periplasmic space"/>
    <property type="evidence" value="ECO:0007669"/>
    <property type="project" value="InterPro"/>
</dbReference>
<dbReference type="GO" id="GO:0042277">
    <property type="term" value="F:peptide binding"/>
    <property type="evidence" value="ECO:0007669"/>
    <property type="project" value="InterPro"/>
</dbReference>
<dbReference type="GO" id="GO:0003755">
    <property type="term" value="F:peptidyl-prolyl cis-trans isomerase activity"/>
    <property type="evidence" value="ECO:0007669"/>
    <property type="project" value="UniProtKB-UniRule"/>
</dbReference>
<dbReference type="GO" id="GO:0051082">
    <property type="term" value="F:unfolded protein binding"/>
    <property type="evidence" value="ECO:0007669"/>
    <property type="project" value="UniProtKB-UniRule"/>
</dbReference>
<dbReference type="GO" id="GO:0043165">
    <property type="term" value="P:Gram-negative-bacterium-type cell outer membrane assembly"/>
    <property type="evidence" value="ECO:0007669"/>
    <property type="project" value="InterPro"/>
</dbReference>
<dbReference type="GO" id="GO:0006457">
    <property type="term" value="P:protein folding"/>
    <property type="evidence" value="ECO:0007669"/>
    <property type="project" value="UniProtKB-UniRule"/>
</dbReference>
<dbReference type="GO" id="GO:0050821">
    <property type="term" value="P:protein stabilization"/>
    <property type="evidence" value="ECO:0007669"/>
    <property type="project" value="InterPro"/>
</dbReference>
<dbReference type="Gene3D" id="3.10.50.40">
    <property type="match status" value="2"/>
</dbReference>
<dbReference type="Gene3D" id="1.10.4030.10">
    <property type="entry name" value="Porin chaperone SurA, peptide-binding domain"/>
    <property type="match status" value="1"/>
</dbReference>
<dbReference type="HAMAP" id="MF_01183">
    <property type="entry name" value="Chaperone_SurA"/>
    <property type="match status" value="1"/>
</dbReference>
<dbReference type="InterPro" id="IPR050280">
    <property type="entry name" value="OMP_Chaperone_SurA"/>
</dbReference>
<dbReference type="InterPro" id="IPR046357">
    <property type="entry name" value="PPIase_dom_sf"/>
</dbReference>
<dbReference type="InterPro" id="IPR000297">
    <property type="entry name" value="PPIase_PpiC"/>
</dbReference>
<dbReference type="InterPro" id="IPR023034">
    <property type="entry name" value="PPIase_SurA"/>
</dbReference>
<dbReference type="InterPro" id="IPR015391">
    <property type="entry name" value="SurA_N"/>
</dbReference>
<dbReference type="InterPro" id="IPR027304">
    <property type="entry name" value="Trigger_fact/SurA_dom_sf"/>
</dbReference>
<dbReference type="PANTHER" id="PTHR47637">
    <property type="entry name" value="CHAPERONE SURA"/>
    <property type="match status" value="1"/>
</dbReference>
<dbReference type="PANTHER" id="PTHR47637:SF1">
    <property type="entry name" value="CHAPERONE SURA"/>
    <property type="match status" value="1"/>
</dbReference>
<dbReference type="Pfam" id="PF00639">
    <property type="entry name" value="Rotamase"/>
    <property type="match status" value="2"/>
</dbReference>
<dbReference type="Pfam" id="PF09312">
    <property type="entry name" value="SurA_N"/>
    <property type="match status" value="1"/>
</dbReference>
<dbReference type="SUPFAM" id="SSF54534">
    <property type="entry name" value="FKBP-like"/>
    <property type="match status" value="2"/>
</dbReference>
<dbReference type="SUPFAM" id="SSF109998">
    <property type="entry name" value="Triger factor/SurA peptide-binding domain-like"/>
    <property type="match status" value="1"/>
</dbReference>
<dbReference type="PROSITE" id="PS50198">
    <property type="entry name" value="PPIC_PPIASE_2"/>
    <property type="match status" value="2"/>
</dbReference>
<proteinExistence type="inferred from homology"/>
<protein>
    <recommendedName>
        <fullName evidence="1">Chaperone SurA</fullName>
    </recommendedName>
    <alternativeName>
        <fullName evidence="1">Peptidyl-prolyl cis-trans isomerase SurA</fullName>
        <shortName evidence="1">PPIase SurA</shortName>
        <ecNumber evidence="1">5.2.1.8</ecNumber>
    </alternativeName>
    <alternativeName>
        <fullName evidence="1">Rotamase SurA</fullName>
    </alternativeName>
</protein>
<gene>
    <name evidence="1" type="primary">surA</name>
    <name type="ordered locus">Tcr_1655</name>
</gene>
<reference key="1">
    <citation type="journal article" date="2006" name="PLoS Biol.">
        <title>The genome of deep-sea vent chemolithoautotroph Thiomicrospira crunogena XCL-2.</title>
        <authorList>
            <person name="Scott K.M."/>
            <person name="Sievert S.M."/>
            <person name="Abril F.N."/>
            <person name="Ball L.A."/>
            <person name="Barrett C.J."/>
            <person name="Blake R.A."/>
            <person name="Boller A.J."/>
            <person name="Chain P.S.G."/>
            <person name="Clark J.A."/>
            <person name="Davis C.R."/>
            <person name="Detter C."/>
            <person name="Do K.F."/>
            <person name="Dobrinski K.P."/>
            <person name="Faza B.I."/>
            <person name="Fitzpatrick K.A."/>
            <person name="Freyermuth S.K."/>
            <person name="Harmer T.L."/>
            <person name="Hauser L.J."/>
            <person name="Huegler M."/>
            <person name="Kerfeld C.A."/>
            <person name="Klotz M.G."/>
            <person name="Kong W.W."/>
            <person name="Land M."/>
            <person name="Lapidus A."/>
            <person name="Larimer F.W."/>
            <person name="Longo D.L."/>
            <person name="Lucas S."/>
            <person name="Malfatti S.A."/>
            <person name="Massey S.E."/>
            <person name="Martin D.D."/>
            <person name="McCuddin Z."/>
            <person name="Meyer F."/>
            <person name="Moore J.L."/>
            <person name="Ocampo L.H. Jr."/>
            <person name="Paul J.H."/>
            <person name="Paulsen I.T."/>
            <person name="Reep D.K."/>
            <person name="Ren Q."/>
            <person name="Ross R.L."/>
            <person name="Sato P.Y."/>
            <person name="Thomas P."/>
            <person name="Tinkham L.E."/>
            <person name="Zeruth G.T."/>
        </authorList>
    </citation>
    <scope>NUCLEOTIDE SEQUENCE [LARGE SCALE GENOMIC DNA]</scope>
    <source>
        <strain>DSM 25203 / XCL-2</strain>
    </source>
</reference>
<accession>Q31F26</accession>